<comment type="function">
    <text evidence="1 7 10 13">Key enzyme in the regulation of glycerol uptake and metabolism. Catalyzes the phosphorylation of glycerol to yield sn-glycerol 3-phosphate. It also catalyzes the phosphorylation of dihydroxyacetone, L-glyceraldehyde and D-glyceraldehyde. It uses only ATP.</text>
</comment>
<comment type="catalytic activity">
    <reaction evidence="1 13">
        <text>glycerol + ATP = sn-glycerol 3-phosphate + ADP + H(+)</text>
        <dbReference type="Rhea" id="RHEA:21644"/>
        <dbReference type="ChEBI" id="CHEBI:15378"/>
        <dbReference type="ChEBI" id="CHEBI:17754"/>
        <dbReference type="ChEBI" id="CHEBI:30616"/>
        <dbReference type="ChEBI" id="CHEBI:57597"/>
        <dbReference type="ChEBI" id="CHEBI:456216"/>
        <dbReference type="EC" id="2.7.1.30"/>
    </reaction>
</comment>
<comment type="activity regulation">
    <text evidence="5 8 9 10 12 15 18 19">Activity of this regulatory enzyme is affected by several metabolites. The non-competitive allosteric inhibition by fructose 1,6-bisphosphate (FBP) causes alterations in the quaternary structure of the enzyme. FBP inhibition requires that the enzyme exists only in a tetrameric state. Salt such as KCl reduces the affinity of the tetrameric form of the enzyme for FBP. Unphosphorylated phosphocarrier protein EIIA-Glc (III-Glc), an integral component of the bacterial phosphotransferase (PTS) system, also inhibits non-competitively and allosterically the activity. Unlike FBP, both the dimer and the tetramer appear to be fully sensitive to enzyme EIIA-Glc inhibition. Zn(+2) greatly enhances the inhibitory potency of EIIA-Glc. Both allosteric regulatory agents are strongly pH dependent, with maximal inhibition occurring at pH 6.5.</text>
</comment>
<comment type="biophysicochemical properties">
    <kinetics>
        <KM evidence="8 10 13 18">1.3 uM for glycerol</KM>
        <KM evidence="8 10 13 18">400 uM for D-glyceraldehyde</KM>
        <KM evidence="8 10 13 18">500 uM for dihydroxyacetone</KM>
        <KM evidence="8 10 13 18">3 mM for L-glyceraldehyde</KM>
        <KM evidence="8 10 13 18">4 mM for ATP</KM>
    </kinetics>
    <phDependence>
        <text evidence="8 10 13 18">Optimum pH is 9.8.</text>
    </phDependence>
</comment>
<comment type="pathway">
    <text evidence="1">Polyol metabolism; glycerol degradation via glycerol kinase pathway; sn-glycerol 3-phosphate from glycerol: step 1/1.</text>
</comment>
<comment type="subunit">
    <text evidence="1 2 3 4 5 11 14 15 18 19">Homotetramer and homodimer (in equilibrium). Heterodimer with EIIA-Glc (crr). Binds 1 zinc ion per glycerol kinase EIIA-Glc dimer. The zinc ion is important for dimerization.</text>
</comment>
<comment type="interaction">
    <interactant intactId="EBI-548038">
        <id>P0A6F3</id>
    </interactant>
    <interactant intactId="EBI-548038">
        <id>P0A6F3</id>
        <label>glpK</label>
    </interactant>
    <organismsDiffer>false</organismsDiffer>
    <experiments>2</experiments>
</comment>
<comment type="induction">
    <text evidence="7">By L-alpha-glycerol 3-phosphate.</text>
</comment>
<comment type="similarity">
    <text evidence="1">Belongs to the FGGY kinase family.</text>
</comment>
<dbReference type="EC" id="2.7.1.30" evidence="1"/>
<dbReference type="EMBL" id="M18393">
    <property type="protein sequence ID" value="AAA23913.1"/>
    <property type="molecule type" value="Genomic_DNA"/>
</dbReference>
<dbReference type="EMBL" id="M55990">
    <property type="protein sequence ID" value="AAA23887.1"/>
    <property type="molecule type" value="Genomic_DNA"/>
</dbReference>
<dbReference type="EMBL" id="L19201">
    <property type="protein sequence ID" value="AAB03058.1"/>
    <property type="molecule type" value="Genomic_DNA"/>
</dbReference>
<dbReference type="EMBL" id="U00096">
    <property type="protein sequence ID" value="AAC76908.1"/>
    <property type="molecule type" value="Genomic_DNA"/>
</dbReference>
<dbReference type="EMBL" id="AP009048">
    <property type="protein sequence ID" value="BAE77384.1"/>
    <property type="molecule type" value="Genomic_DNA"/>
</dbReference>
<dbReference type="EMBL" id="X15054">
    <property type="protein sequence ID" value="CAA33154.1"/>
    <property type="molecule type" value="Genomic_DNA"/>
</dbReference>
<dbReference type="EMBL" id="U41468">
    <property type="protein sequence ID" value="AAB60196.1"/>
    <property type="molecule type" value="Genomic_DNA"/>
</dbReference>
<dbReference type="PIR" id="A27339">
    <property type="entry name" value="KIECGL"/>
</dbReference>
<dbReference type="RefSeq" id="NP_418361.1">
    <property type="nucleotide sequence ID" value="NC_000913.3"/>
</dbReference>
<dbReference type="RefSeq" id="WP_000136788.1">
    <property type="nucleotide sequence ID" value="NZ_SSZK01000014.1"/>
</dbReference>
<dbReference type="PDB" id="1BO5">
    <property type="method" value="X-ray"/>
    <property type="resolution" value="3.20 A"/>
    <property type="chains" value="O/Z=2-502"/>
</dbReference>
<dbReference type="PDB" id="1BOT">
    <property type="method" value="X-ray"/>
    <property type="resolution" value="3.05 A"/>
    <property type="chains" value="O/Z=2-502"/>
</dbReference>
<dbReference type="PDB" id="1BU6">
    <property type="method" value="X-ray"/>
    <property type="resolution" value="2.37 A"/>
    <property type="chains" value="O/X/Y/Z=2-502"/>
</dbReference>
<dbReference type="PDB" id="1BWF">
    <property type="method" value="X-ray"/>
    <property type="resolution" value="3.00 A"/>
    <property type="chains" value="O/Y=2-502"/>
</dbReference>
<dbReference type="PDB" id="1GLA">
    <property type="method" value="X-ray"/>
    <property type="resolution" value="2.60 A"/>
    <property type="chains" value="G=2-502"/>
</dbReference>
<dbReference type="PDB" id="1GLB">
    <property type="method" value="X-ray"/>
    <property type="resolution" value="2.60 A"/>
    <property type="chains" value="G=2-502"/>
</dbReference>
<dbReference type="PDB" id="1GLC">
    <property type="method" value="X-ray"/>
    <property type="resolution" value="2.65 A"/>
    <property type="chains" value="G=2-502"/>
</dbReference>
<dbReference type="PDB" id="1GLD">
    <property type="method" value="X-ray"/>
    <property type="resolution" value="2.93 A"/>
    <property type="chains" value="G=2-502"/>
</dbReference>
<dbReference type="PDB" id="1GLE">
    <property type="method" value="X-ray"/>
    <property type="resolution" value="2.94 A"/>
    <property type="chains" value="G=2-502"/>
</dbReference>
<dbReference type="PDB" id="1GLF">
    <property type="method" value="X-ray"/>
    <property type="resolution" value="2.62 A"/>
    <property type="chains" value="O/X/Y/Z=2-502"/>
</dbReference>
<dbReference type="PDB" id="1GLJ">
    <property type="method" value="X-ray"/>
    <property type="resolution" value="3.00 A"/>
    <property type="chains" value="O/Y=2-502"/>
</dbReference>
<dbReference type="PDB" id="1GLL">
    <property type="method" value="X-ray"/>
    <property type="resolution" value="3.00 A"/>
    <property type="chains" value="O/Y=2-502"/>
</dbReference>
<dbReference type="PDB" id="3EZW">
    <property type="method" value="X-ray"/>
    <property type="resolution" value="2.00 A"/>
    <property type="chains" value="A/B/C/D/E/F/G/H=2-501"/>
</dbReference>
<dbReference type="PDBsum" id="1BO5"/>
<dbReference type="PDBsum" id="1BOT"/>
<dbReference type="PDBsum" id="1BU6"/>
<dbReference type="PDBsum" id="1BWF"/>
<dbReference type="PDBsum" id="1GLA"/>
<dbReference type="PDBsum" id="1GLB"/>
<dbReference type="PDBsum" id="1GLC"/>
<dbReference type="PDBsum" id="1GLD"/>
<dbReference type="PDBsum" id="1GLE"/>
<dbReference type="PDBsum" id="1GLF"/>
<dbReference type="PDBsum" id="1GLJ"/>
<dbReference type="PDBsum" id="1GLL"/>
<dbReference type="PDBsum" id="3EZW"/>
<dbReference type="SMR" id="P0A6F3"/>
<dbReference type="BioGRID" id="4263162">
    <property type="interactions" value="392"/>
</dbReference>
<dbReference type="DIP" id="DIP-36011N"/>
<dbReference type="FunCoup" id="P0A6F3">
    <property type="interactions" value="743"/>
</dbReference>
<dbReference type="IntAct" id="P0A6F3">
    <property type="interactions" value="15"/>
</dbReference>
<dbReference type="STRING" id="511145.b3926"/>
<dbReference type="ChEMBL" id="CHEMBL4523174"/>
<dbReference type="DrugBank" id="DB04551">
    <property type="generic name" value="beta-D-fructofuranose 1,6-bisphosphate"/>
</dbReference>
<dbReference type="DrugBank" id="DB02937">
    <property type="generic name" value="Gamma-Arsono-Beta, Gamma-Methyleneadenosine-5'-Diphosphate"/>
</dbReference>
<dbReference type="SwissLipids" id="SLP:000001805"/>
<dbReference type="jPOST" id="P0A6F3"/>
<dbReference type="PaxDb" id="511145-b3926"/>
<dbReference type="EnsemblBacteria" id="AAC76908">
    <property type="protein sequence ID" value="AAC76908"/>
    <property type="gene ID" value="b3926"/>
</dbReference>
<dbReference type="GeneID" id="75169366"/>
<dbReference type="GeneID" id="948423"/>
<dbReference type="KEGG" id="ecj:JW3897"/>
<dbReference type="KEGG" id="eco:b3926"/>
<dbReference type="KEGG" id="ecoc:C3026_21220"/>
<dbReference type="PATRIC" id="fig|1411691.4.peg.2779"/>
<dbReference type="EchoBASE" id="EB0393"/>
<dbReference type="eggNOG" id="COG0554">
    <property type="taxonomic scope" value="Bacteria"/>
</dbReference>
<dbReference type="HOGENOM" id="CLU_009281_2_3_6"/>
<dbReference type="InParanoid" id="P0A6F3"/>
<dbReference type="OMA" id="FMLMNIG"/>
<dbReference type="OrthoDB" id="9805576at2"/>
<dbReference type="PhylomeDB" id="P0A6F3"/>
<dbReference type="BioCyc" id="EcoCyc:GLYCEROL-KIN-MONOMER"/>
<dbReference type="BioCyc" id="MetaCyc:GLYCEROL-KIN-MONOMER"/>
<dbReference type="BRENDA" id="2.7.1.30">
    <property type="organism ID" value="2026"/>
</dbReference>
<dbReference type="UniPathway" id="UPA00618">
    <property type="reaction ID" value="UER00672"/>
</dbReference>
<dbReference type="EvolutionaryTrace" id="P0A6F3"/>
<dbReference type="PRO" id="PR:P0A6F3"/>
<dbReference type="Proteomes" id="UP000000625">
    <property type="component" value="Chromosome"/>
</dbReference>
<dbReference type="GO" id="GO:0005829">
    <property type="term" value="C:cytosol"/>
    <property type="evidence" value="ECO:0000314"/>
    <property type="project" value="EcoCyc"/>
</dbReference>
<dbReference type="GO" id="GO:0005524">
    <property type="term" value="F:ATP binding"/>
    <property type="evidence" value="ECO:0007669"/>
    <property type="project" value="UniProtKB-UniRule"/>
</dbReference>
<dbReference type="GO" id="GO:0004370">
    <property type="term" value="F:glycerol kinase activity"/>
    <property type="evidence" value="ECO:0000314"/>
    <property type="project" value="UniProtKB"/>
</dbReference>
<dbReference type="GO" id="GO:0042802">
    <property type="term" value="F:identical protein binding"/>
    <property type="evidence" value="ECO:0000353"/>
    <property type="project" value="IntAct"/>
</dbReference>
<dbReference type="GO" id="GO:0046872">
    <property type="term" value="F:metal ion binding"/>
    <property type="evidence" value="ECO:0000314"/>
    <property type="project" value="EcoCyc"/>
</dbReference>
<dbReference type="GO" id="GO:0008270">
    <property type="term" value="F:zinc ion binding"/>
    <property type="evidence" value="ECO:0000314"/>
    <property type="project" value="UniProtKB"/>
</dbReference>
<dbReference type="GO" id="GO:0006974">
    <property type="term" value="P:DNA damage response"/>
    <property type="evidence" value="ECO:0000270"/>
    <property type="project" value="EcoliWiki"/>
</dbReference>
<dbReference type="GO" id="GO:0019563">
    <property type="term" value="P:glycerol catabolic process"/>
    <property type="evidence" value="ECO:0000315"/>
    <property type="project" value="EcoCyc"/>
</dbReference>
<dbReference type="GO" id="GO:0006071">
    <property type="term" value="P:glycerol metabolic process"/>
    <property type="evidence" value="ECO:0000314"/>
    <property type="project" value="UniProtKB"/>
</dbReference>
<dbReference type="GO" id="GO:0006072">
    <property type="term" value="P:glycerol-3-phosphate metabolic process"/>
    <property type="evidence" value="ECO:0007669"/>
    <property type="project" value="InterPro"/>
</dbReference>
<dbReference type="CDD" id="cd07786">
    <property type="entry name" value="FGGY_EcGK_like"/>
    <property type="match status" value="1"/>
</dbReference>
<dbReference type="FunFam" id="3.30.420.40:FF:000007">
    <property type="entry name" value="Glycerol kinase"/>
    <property type="match status" value="1"/>
</dbReference>
<dbReference type="FunFam" id="3.30.420.40:FF:000008">
    <property type="entry name" value="Glycerol kinase"/>
    <property type="match status" value="1"/>
</dbReference>
<dbReference type="Gene3D" id="3.30.420.40">
    <property type="match status" value="2"/>
</dbReference>
<dbReference type="HAMAP" id="MF_00186">
    <property type="entry name" value="Glycerol_kin"/>
    <property type="match status" value="1"/>
</dbReference>
<dbReference type="InterPro" id="IPR043129">
    <property type="entry name" value="ATPase_NBD"/>
</dbReference>
<dbReference type="InterPro" id="IPR000577">
    <property type="entry name" value="Carb_kinase_FGGY"/>
</dbReference>
<dbReference type="InterPro" id="IPR018483">
    <property type="entry name" value="Carb_kinase_FGGY_CS"/>
</dbReference>
<dbReference type="InterPro" id="IPR018485">
    <property type="entry name" value="FGGY_C"/>
</dbReference>
<dbReference type="InterPro" id="IPR018484">
    <property type="entry name" value="FGGY_N"/>
</dbReference>
<dbReference type="InterPro" id="IPR005999">
    <property type="entry name" value="Glycerol_kin"/>
</dbReference>
<dbReference type="NCBIfam" id="TIGR01311">
    <property type="entry name" value="glycerol_kin"/>
    <property type="match status" value="1"/>
</dbReference>
<dbReference type="NCBIfam" id="NF000756">
    <property type="entry name" value="PRK00047.1"/>
    <property type="match status" value="1"/>
</dbReference>
<dbReference type="PANTHER" id="PTHR10196:SF69">
    <property type="entry name" value="GLYCEROL KINASE"/>
    <property type="match status" value="1"/>
</dbReference>
<dbReference type="PANTHER" id="PTHR10196">
    <property type="entry name" value="SUGAR KINASE"/>
    <property type="match status" value="1"/>
</dbReference>
<dbReference type="Pfam" id="PF02782">
    <property type="entry name" value="FGGY_C"/>
    <property type="match status" value="1"/>
</dbReference>
<dbReference type="Pfam" id="PF00370">
    <property type="entry name" value="FGGY_N"/>
    <property type="match status" value="1"/>
</dbReference>
<dbReference type="PIRSF" id="PIRSF000538">
    <property type="entry name" value="GlpK"/>
    <property type="match status" value="1"/>
</dbReference>
<dbReference type="SUPFAM" id="SSF53067">
    <property type="entry name" value="Actin-like ATPase domain"/>
    <property type="match status" value="2"/>
</dbReference>
<dbReference type="PROSITE" id="PS00933">
    <property type="entry name" value="FGGY_KINASES_1"/>
    <property type="match status" value="1"/>
</dbReference>
<dbReference type="PROSITE" id="PS00445">
    <property type="entry name" value="FGGY_KINASES_2"/>
    <property type="match status" value="1"/>
</dbReference>
<sequence>MTEKKYIVALDQGTTSSRAVVMDHDANIISVSQREFEQIYPKPGWVEHDPMEIWATQSSTLVEVLAKADISSDQIAAIGITNQRETTIVWEKETGKPIYNAIVWQCRRTAEICEHLKRDGLEDYIRSNTGLVIDPYFSGTKVKWILDHVEGSRERARRGELLFGTVDTWLIWKMTQGRVHVTDYTNASRTMLFNIHTLDWDDKMLEVLDIPREMLPEVRRSSEVYGQTNIGGKGGTRIPISGIAGDQQAALFGQLCVKEGMAKNTYGTGCFMLMNTGEKAVKSENGLLTTIACGPTGEVNYALEGAVFMAGASIQWLRDEMKLINDAYDSEYFATKVQNTNGVYVVPAFTGLGAPYWDPYARGAIFGLTRGVNANHIIRATLESIAYQTRDVLEAMQADSGIRLHALRVDGGAVANNFLMQFQSDILGTRVERPEVREVTALGAAYLAGLAVGFWQNLDELQEKAVIEREFRPGIETTERNYRYAGWKKAVKRAMAWEEHDE</sequence>
<reference key="1">
    <citation type="journal article" date="1988" name="J. Biol. Chem.">
        <title>Escherichia coli glycerol kinase. Cloning and sequencing of the glpK gene and the primary structure of the enzyme.</title>
        <authorList>
            <person name="Pettigrew D.W."/>
            <person name="Ma D.-P."/>
            <person name="Conrad C.A."/>
            <person name="Johnson J.R."/>
        </authorList>
    </citation>
    <scope>NUCLEOTIDE SEQUENCE [GENOMIC DNA]</scope>
    <scope>PROTEIN SEQUENCE OF 2-24</scope>
    <scope>FUNCTION</scope>
    <scope>INDUCTION</scope>
</reference>
<reference key="2">
    <citation type="journal article" date="1992" name="J. Biol. Chem.">
        <title>Structure and regulation of the glpFK operon encoding glycerol diffusion facilitator and glycerol kinase of Escherichia coli K-12.</title>
        <authorList>
            <person name="Weissenborn D.L."/>
            <person name="Wittekindt N."/>
            <person name="Larson T.J."/>
        </authorList>
    </citation>
    <scope>NUCLEOTIDE SEQUENCE [GENOMIC DNA]</scope>
</reference>
<reference key="3">
    <citation type="journal article" date="1993" name="Nucleic Acids Res.">
        <title>Analysis of the Escherichia coli genome. III. DNA sequence of the region from 87.2 to 89.2 minutes.</title>
        <authorList>
            <person name="Plunkett G. III"/>
            <person name="Burland V."/>
            <person name="Daniels D.L."/>
            <person name="Blattner F.R."/>
        </authorList>
    </citation>
    <scope>NUCLEOTIDE SEQUENCE [LARGE SCALE GENOMIC DNA]</scope>
    <source>
        <strain>K12 / MG1655 / ATCC 47076</strain>
    </source>
</reference>
<reference key="4">
    <citation type="journal article" date="1997" name="Science">
        <title>The complete genome sequence of Escherichia coli K-12.</title>
        <authorList>
            <person name="Blattner F.R."/>
            <person name="Plunkett G. III"/>
            <person name="Bloch C.A."/>
            <person name="Perna N.T."/>
            <person name="Burland V."/>
            <person name="Riley M."/>
            <person name="Collado-Vides J."/>
            <person name="Glasner J.D."/>
            <person name="Rode C.K."/>
            <person name="Mayhew G.F."/>
            <person name="Gregor J."/>
            <person name="Davis N.W."/>
            <person name="Kirkpatrick H.A."/>
            <person name="Goeden M.A."/>
            <person name="Rose D.J."/>
            <person name="Mau B."/>
            <person name="Shao Y."/>
        </authorList>
    </citation>
    <scope>NUCLEOTIDE SEQUENCE [LARGE SCALE GENOMIC DNA]</scope>
    <source>
        <strain>K12 / MG1655 / ATCC 47076</strain>
    </source>
</reference>
<reference key="5">
    <citation type="journal article" date="2006" name="Mol. Syst. Biol.">
        <title>Highly accurate genome sequences of Escherichia coli K-12 strains MG1655 and W3110.</title>
        <authorList>
            <person name="Hayashi K."/>
            <person name="Morooka N."/>
            <person name="Yamamoto Y."/>
            <person name="Fujita K."/>
            <person name="Isono K."/>
            <person name="Choi S."/>
            <person name="Ohtsubo E."/>
            <person name="Baba T."/>
            <person name="Wanner B.L."/>
            <person name="Mori H."/>
            <person name="Horiuchi T."/>
        </authorList>
    </citation>
    <scope>NUCLEOTIDE SEQUENCE [LARGE SCALE GENOMIC DNA]</scope>
    <source>
        <strain>K12 / W3110 / ATCC 27325 / DSM 5911</strain>
    </source>
</reference>
<reference key="6">
    <citation type="journal article" date="1989" name="Nucleic Acids Res.">
        <title>Nucleotide sequence of the region encompassing the glpKF operon and its upstream region containing a bent DNA sequence of Escherichia coli.</title>
        <authorList>
            <person name="Muramatsu S."/>
            <person name="Mizuno T."/>
        </authorList>
    </citation>
    <scope>NUCLEOTIDE SEQUENCE [GENOMIC DNA] OF 1-31</scope>
</reference>
<reference key="7">
    <citation type="journal article" date="1996" name="Mol. Microbiol.">
        <title>FIS is a regulator of metabolism in Escherichia coli.</title>
        <authorList>
            <person name="Gonzalez-Gil G."/>
            <person name="Bringmann P."/>
            <person name="Kahmann R."/>
        </authorList>
    </citation>
    <scope>PROTEIN SEQUENCE OF 2-14</scope>
    <source>
        <strain>K12</strain>
    </source>
</reference>
<reference key="8">
    <citation type="journal article" date="1996" name="J. Bacteriol.">
        <title>A single amino acid change in Escherichia coli glycerol kinase abolishes glucose control of glycerol utilization in vivo.</title>
        <authorList>
            <person name="Pettigrew D.W."/>
            <person name="Liu W.Z."/>
            <person name="Holmes C."/>
            <person name="Meadow N.D."/>
            <person name="Roseman S."/>
        </authorList>
    </citation>
    <scope>NUCLEOTIDE SEQUENCE [GENOMIC DNA]</scope>
    <scope>MUTANT GLPK22</scope>
</reference>
<reference key="9">
    <citation type="journal article" date="1966" name="Science">
        <title>Feedback inhibition of glycerol kinase, a catabolic enzyme in Escherichia coli.</title>
        <authorList>
            <person name="Zwaig N."/>
            <person name="Lin E.C."/>
        </authorList>
    </citation>
    <scope>ACTIVITY REGULATION</scope>
</reference>
<reference key="10">
    <citation type="journal article" date="1967" name="J. Biol. Chem.">
        <title>Purification and properties of glycerol kinase from Escherichia coli.</title>
        <authorList>
            <person name="Hayashi S.I."/>
            <person name="Lin E.C."/>
        </authorList>
    </citation>
    <scope>FUNCTION</scope>
    <scope>CATALYTIC ACTIVITY</scope>
    <scope>BIOPHYSICOCHEMICAL PROPERTIES</scope>
    <scope>SUBSTRATE SPECIFICITY</scope>
</reference>
<reference key="11">
    <citation type="journal article" date="1971" name="J. Biol. Chem.">
        <title>Composition and subunit structure of glycerol kinase from Escherichia coli.</title>
        <authorList>
            <person name="Thorner J.W."/>
            <person name="Paulus H."/>
        </authorList>
    </citation>
    <scope>SUBUNIT</scope>
</reference>
<reference key="12">
    <citation type="journal article" date="1973" name="J. Biol. Chem.">
        <title>Catalytic and allosteric properties of glycerol kinase from Escherichia coli.</title>
        <authorList>
            <person name="Thorner J.W."/>
            <person name="Paulus H."/>
        </authorList>
    </citation>
    <scope>FUNCTION</scope>
    <scope>ACTIVITY REGULATION</scope>
    <scope>BIOPHYSICOCHEMICAL PROPERTIES</scope>
</reference>
<reference key="13">
    <citation type="journal article" date="1978" name="Biochemistry">
        <title>Subunit dissociation in the allosteric regulation of glycerol kinase from Escherichia coli. 1. Kinetic evidence.</title>
        <authorList>
            <person name="de Riel J.K."/>
            <person name="Paulus H."/>
        </authorList>
    </citation>
    <scope>SUBUNIT</scope>
</reference>
<reference key="14">
    <citation type="journal article" date="1978" name="Biochemistry">
        <title>Subunit dissociation in the allosteric regulation of glycerol kinase from Escherichia coli. 2. Physical evidence.</title>
        <authorList>
            <person name="de Riel J.K."/>
            <person name="Paulus H."/>
        </authorList>
    </citation>
    <scope>SUBUNIT</scope>
    <scope>ACTIVITY REGULATION</scope>
</reference>
<reference key="15">
    <citation type="journal article" date="1978" name="Biochemistry">
        <title>Subunit dissociation in the allosteric regulation of glycerol kinase from Escherichia coli. 3. Role in desensitization.</title>
        <authorList>
            <person name="de Riel J.K."/>
            <person name="Paulus H."/>
        </authorList>
    </citation>
    <scope>ACTIVITY REGULATION</scope>
</reference>
<reference key="16">
    <citation type="journal article" date="1985" name="J. Bacteriol.">
        <title>Allosteric regulation of glycerol kinase by enzyme IIIglc of the phosphotransferase system in Escherichia coli and Salmonella typhimurium.</title>
        <authorList>
            <person name="Novotny M.J."/>
            <person name="Frederickson W.L."/>
            <person name="Waygood E.B."/>
            <person name="Saier M.H. Jr."/>
        </authorList>
    </citation>
    <scope>ACTIVITY REGULATION</scope>
    <scope>BIOPHYSICOCHEMICAL PROPERTIES</scope>
</reference>
<reference key="17">
    <citation type="journal article" date="1997" name="Electrophoresis">
        <title>Escherichia coli proteome analysis using the gene-protein database.</title>
        <authorList>
            <person name="VanBogelen R.A."/>
            <person name="Abshire K.Z."/>
            <person name="Moldover B."/>
            <person name="Olson E.R."/>
            <person name="Neidhardt F.C."/>
        </authorList>
    </citation>
    <scope>IDENTIFICATION BY 2D-GEL</scope>
</reference>
<reference key="18">
    <citation type="journal article" date="2011" name="Mol. Cell. Proteomics">
        <title>The first identification of lysine malonylation substrates and its regulatory enzyme.</title>
        <authorList>
            <person name="Peng C."/>
            <person name="Lu Z."/>
            <person name="Xie Z."/>
            <person name="Cheng Z."/>
            <person name="Chen Y."/>
            <person name="Tan M."/>
            <person name="Luo H."/>
            <person name="Zhang Y."/>
            <person name="He W."/>
            <person name="Yang K."/>
            <person name="Zwaans B.M."/>
            <person name="Tishkoff D."/>
            <person name="Ho L."/>
            <person name="Lombard D."/>
            <person name="He T.C."/>
            <person name="Dai J."/>
            <person name="Verdin E."/>
            <person name="Ye Y."/>
            <person name="Zhao Y."/>
        </authorList>
    </citation>
    <scope>MALONYLATION AT LYS-233</scope>
    <source>
        <strain>K12</strain>
    </source>
</reference>
<reference evidence="25 26" key="19">
    <citation type="journal article" date="1993" name="Science">
        <title>Structure of the regulatory complex of Escherichia coli IIIGlc with glycerol kinase.</title>
        <authorList>
            <person name="Hurley J.H."/>
            <person name="Faber H.R."/>
            <person name="Worthylake D."/>
            <person name="Meadow N.D."/>
            <person name="Roseman S."/>
            <person name="Pettigrew D.W."/>
            <person name="Remington S.J."/>
        </authorList>
    </citation>
    <scope>X-RAY CRYSTALLOGRAPHY (2.6 ANGSTROMS) IN COMPLEX WITH EIIA-GLC; GLYCEROL AND ADP</scope>
    <scope>ACTIVITY REGULATION</scope>
    <scope>SUBUNIT</scope>
</reference>
<reference evidence="27 28 29" key="20">
    <citation type="journal article" date="1994" name="Proc. Natl. Acad. Sci. U.S.A.">
        <title>Cation-promoted association of a regulatory and target protein is controlled by protein phosphorylation.</title>
        <authorList>
            <person name="Feese M."/>
            <person name="Pettigrew D.W."/>
            <person name="Meadow N.D."/>
            <person name="Roseman S."/>
            <person name="Remington S.J."/>
        </authorList>
    </citation>
    <scope>X-RAY CRYSTALLOGRAPHY (2.65 ANGSTROMS) IN COMPLEX WITH EIIA-GLC; SN-GLYCEROL 3-PHOSPHATE; ADP AND ZINC ION</scope>
    <scope>SUBUNIT</scope>
</reference>
<reference evidence="21 22" key="21">
    <citation type="journal article" date="1998" name="Biochemistry">
        <title>Crystal structure of a complex of Escherichia coli glycerol kinase and an allosteric effector fructose 1,6-bisphosphate.</title>
        <authorList>
            <person name="Ormoe M."/>
            <person name="Bystrom C.E."/>
            <person name="Remington S.J."/>
        </authorList>
    </citation>
    <scope>X-RAY CRYSTALLOGRAPHY (3.2 ANGSTROMS) OF APOENZYME AND COMPLEX WITH GLYCEROL AND FRUCTOSE-1-6-BISPHOSPHATE</scope>
    <scope>MUTAGENESIS OF ARG-237</scope>
    <scope>ACTIVITY REGULATION</scope>
    <scope>SUBUNIT</scope>
</reference>
<reference evidence="23 30" key="22">
    <citation type="journal article" date="1998" name="Structure">
        <title>Glycerol kinase from Escherichia coli and an Ala65--&gt;Thr mutant: the crystal structures reveal conformational changes with implications for allosteric regulation.</title>
        <authorList>
            <person name="Feese M.D."/>
            <person name="Faber H.R."/>
            <person name="Bystrom C.E."/>
            <person name="Pettigrew D.W."/>
            <person name="Remington S.J."/>
        </authorList>
    </citation>
    <scope>X-RAY CRYSTALLOGRAPHY (2.37 ANGSTROMS) OF MUTANT THR-66 IN COMPLEX WITH ADP; GLYCEROL AND OF MUTANT ASP-475 IN COMPLEX WITH EIIA-GLC</scope>
    <scope>MUTAGENESIS OF ALA-66; ILE-475 AND ARG-480</scope>
    <scope>ACTIVITY REGULATION</scope>
    <scope>BIOPHYSICOCHEMICAL PROPERTIES</scope>
    <scope>SUBUNIT</scope>
</reference>
<reference evidence="24 31 32" key="23">
    <citation type="journal article" date="1999" name="Biochemistry">
        <title>Crystal structures of Escherichia coli glycerol kinase variant S58--&gt;W in complex with nonhydrolyzable ATP analogues reveal a putative active conformation of the enzyme as a result of domain motion.</title>
        <authorList>
            <person name="Bystrom C.E."/>
            <person name="Pettigrew D.W."/>
            <person name="Branchaud B.P."/>
            <person name="O'Brien P."/>
            <person name="Remington S.J."/>
        </authorList>
    </citation>
    <scope>X-RAY CRYSTALLOGRAPHY (3.0 ANGSTROMS) OF MUTANT TRP-59 IN COMPLEX WITH GLYCEROL AND ATP ANALOGS</scope>
    <scope>MUTAGENESIS OF SER-59</scope>
    <scope>SUBUNIT</scope>
</reference>
<reference evidence="33" key="24">
    <citation type="journal article" date="2007" name="Biochemistry">
        <title>Crystal structure of a hyperactive Escherichia coli glycerol kinase mutant Gly230 --&gt; Asp obtained using microfluidic crystallization devices.</title>
        <authorList>
            <person name="Anderson M.J."/>
            <person name="DeLabarre B."/>
            <person name="Raghunathan A."/>
            <person name="Palsson B.O."/>
            <person name="Brunger A.T."/>
            <person name="Quake S.R."/>
        </authorList>
    </citation>
    <scope>X-RAY CRYSTALLOGRAPHY (2.0 ANGSTROMS) OF MUTANT ASP-231 IN COMPLEX WITH GLYCEROL</scope>
    <scope>MUTAGENESIS OF GLY-231</scope>
    <scope>SUBUNIT</scope>
</reference>
<proteinExistence type="evidence at protein level"/>
<organism>
    <name type="scientific">Escherichia coli (strain K12)</name>
    <dbReference type="NCBI Taxonomy" id="83333"/>
    <lineage>
        <taxon>Bacteria</taxon>
        <taxon>Pseudomonadati</taxon>
        <taxon>Pseudomonadota</taxon>
        <taxon>Gammaproteobacteria</taxon>
        <taxon>Enterobacterales</taxon>
        <taxon>Enterobacteriaceae</taxon>
        <taxon>Escherichia</taxon>
    </lineage>
</organism>
<keyword id="KW-0002">3D-structure</keyword>
<keyword id="KW-0021">Allosteric enzyme</keyword>
<keyword id="KW-0067">ATP-binding</keyword>
<keyword id="KW-0903">Direct protein sequencing</keyword>
<keyword id="KW-0319">Glycerol metabolism</keyword>
<keyword id="KW-0418">Kinase</keyword>
<keyword id="KW-0479">Metal-binding</keyword>
<keyword id="KW-0547">Nucleotide-binding</keyword>
<keyword id="KW-1185">Reference proteome</keyword>
<keyword id="KW-0808">Transferase</keyword>
<keyword id="KW-0862">Zinc</keyword>
<protein>
    <recommendedName>
        <fullName evidence="1">Glycerol kinase</fullName>
        <ecNumber evidence="1">2.7.1.30</ecNumber>
    </recommendedName>
    <alternativeName>
        <fullName evidence="1">ATP:glycerol 3-phosphotransferase</fullName>
    </alternativeName>
    <alternativeName>
        <fullName evidence="1">Glycerokinase</fullName>
        <shortName evidence="1">GK</shortName>
    </alternativeName>
</protein>
<gene>
    <name evidence="1" type="primary">glpK</name>
    <name type="ordered locus">b3926</name>
    <name type="ordered locus">JW3897</name>
</gene>
<accession>P0A6F3</accession>
<accession>P08859</accession>
<accession>Q2M8M2</accession>
<accession>Q59381</accession>
<evidence type="ECO:0000255" key="1">
    <source>
        <dbReference type="HAMAP-Rule" id="MF_00186"/>
    </source>
</evidence>
<evidence type="ECO:0000269" key="2">
    <source>
    </source>
</evidence>
<evidence type="ECO:0000269" key="3">
    <source>
    </source>
</evidence>
<evidence type="ECO:0000269" key="4">
    <source>
    </source>
</evidence>
<evidence type="ECO:0000269" key="5">
    <source>
    </source>
</evidence>
<evidence type="ECO:0000269" key="6">
    <source>
    </source>
</evidence>
<evidence type="ECO:0000269" key="7">
    <source>
    </source>
</evidence>
<evidence type="ECO:0000269" key="8">
    <source>
    </source>
</evidence>
<evidence type="ECO:0000269" key="9">
    <source>
    </source>
</evidence>
<evidence type="ECO:0000269" key="10">
    <source>
    </source>
</evidence>
<evidence type="ECO:0000269" key="11">
    <source>
    </source>
</evidence>
<evidence type="ECO:0000269" key="12">
    <source>
    </source>
</evidence>
<evidence type="ECO:0000269" key="13">
    <source>
    </source>
</evidence>
<evidence type="ECO:0000269" key="14">
    <source>
    </source>
</evidence>
<evidence type="ECO:0000269" key="15">
    <source>
    </source>
</evidence>
<evidence type="ECO:0000269" key="16">
    <source>
    </source>
</evidence>
<evidence type="ECO:0000269" key="17">
    <source>
    </source>
</evidence>
<evidence type="ECO:0000269" key="18">
    <source>
    </source>
</evidence>
<evidence type="ECO:0000269" key="19">
    <source>
    </source>
</evidence>
<evidence type="ECO:0000305" key="20">
    <source>
    </source>
</evidence>
<evidence type="ECO:0007744" key="21">
    <source>
        <dbReference type="PDB" id="1BO5"/>
    </source>
</evidence>
<evidence type="ECO:0007744" key="22">
    <source>
        <dbReference type="PDB" id="1BOT"/>
    </source>
</evidence>
<evidence type="ECO:0007744" key="23">
    <source>
        <dbReference type="PDB" id="1BU6"/>
    </source>
</evidence>
<evidence type="ECO:0007744" key="24">
    <source>
        <dbReference type="PDB" id="1BWF"/>
    </source>
</evidence>
<evidence type="ECO:0007744" key="25">
    <source>
        <dbReference type="PDB" id="1GLA"/>
    </source>
</evidence>
<evidence type="ECO:0007744" key="26">
    <source>
        <dbReference type="PDB" id="1GLB"/>
    </source>
</evidence>
<evidence type="ECO:0007744" key="27">
    <source>
        <dbReference type="PDB" id="1GLC"/>
    </source>
</evidence>
<evidence type="ECO:0007744" key="28">
    <source>
        <dbReference type="PDB" id="1GLD"/>
    </source>
</evidence>
<evidence type="ECO:0007744" key="29">
    <source>
        <dbReference type="PDB" id="1GLE"/>
    </source>
</evidence>
<evidence type="ECO:0007744" key="30">
    <source>
        <dbReference type="PDB" id="1GLF"/>
    </source>
</evidence>
<evidence type="ECO:0007744" key="31">
    <source>
        <dbReference type="PDB" id="1GLJ"/>
    </source>
</evidence>
<evidence type="ECO:0007744" key="32">
    <source>
        <dbReference type="PDB" id="1GLL"/>
    </source>
</evidence>
<evidence type="ECO:0007744" key="33">
    <source>
        <dbReference type="PDB" id="3EZW"/>
    </source>
</evidence>
<evidence type="ECO:0007829" key="34">
    <source>
        <dbReference type="PDB" id="1BU6"/>
    </source>
</evidence>
<evidence type="ECO:0007829" key="35">
    <source>
        <dbReference type="PDB" id="1GLA"/>
    </source>
</evidence>
<evidence type="ECO:0007829" key="36">
    <source>
        <dbReference type="PDB" id="1GLC"/>
    </source>
</evidence>
<evidence type="ECO:0007829" key="37">
    <source>
        <dbReference type="PDB" id="1GLF"/>
    </source>
</evidence>
<evidence type="ECO:0007829" key="38">
    <source>
        <dbReference type="PDB" id="1GLL"/>
    </source>
</evidence>
<evidence type="ECO:0007829" key="39">
    <source>
        <dbReference type="PDB" id="3EZW"/>
    </source>
</evidence>
<feature type="initiator methionine" description="Removed" evidence="7 17">
    <location>
        <position position="1"/>
    </location>
</feature>
<feature type="chain" id="PRO_0000059451" description="Glycerol kinase">
    <location>
        <begin position="2"/>
        <end position="502"/>
    </location>
</feature>
<feature type="binding site" evidence="18 30">
    <location>
        <position position="14"/>
    </location>
    <ligand>
        <name>ADP</name>
        <dbReference type="ChEBI" id="CHEBI:456216"/>
    </ligand>
</feature>
<feature type="binding site" evidence="20 24 31 32">
    <location>
        <position position="14"/>
    </location>
    <ligand>
        <name>ATP</name>
        <dbReference type="ChEBI" id="CHEBI:30616"/>
    </ligand>
</feature>
<feature type="binding site" evidence="14 27 28 29">
    <location>
        <position position="14"/>
    </location>
    <ligand>
        <name>sn-glycerol 3-phosphate</name>
        <dbReference type="ChEBI" id="CHEBI:57597"/>
    </ligand>
</feature>
<feature type="binding site" evidence="20 24 31 32">
    <location>
        <position position="15"/>
    </location>
    <ligand>
        <name>ATP</name>
        <dbReference type="ChEBI" id="CHEBI:30616"/>
    </ligand>
</feature>
<feature type="binding site" evidence="20 31">
    <location>
        <position position="16"/>
    </location>
    <ligand>
        <name>ATP</name>
        <dbReference type="ChEBI" id="CHEBI:30616"/>
    </ligand>
</feature>
<feature type="binding site" evidence="14 15 18 26 28 29 30">
    <location>
        <position position="18"/>
    </location>
    <ligand>
        <name>ADP</name>
        <dbReference type="ChEBI" id="CHEBI:456216"/>
    </ligand>
</feature>
<feature type="binding site" evidence="2 3 15 18 19 21 22 23 24 25 26 30 31 32 33">
    <location>
        <position position="84"/>
    </location>
    <ligand>
        <name>glycerol</name>
        <dbReference type="ChEBI" id="CHEBI:17754"/>
    </ligand>
</feature>
<feature type="binding site" evidence="14 27 28 29">
    <location>
        <position position="84"/>
    </location>
    <ligand>
        <name>sn-glycerol 3-phosphate</name>
        <dbReference type="ChEBI" id="CHEBI:57597"/>
    </ligand>
</feature>
<feature type="binding site" evidence="2 3 15 18 19 21 22 23 24 25 26 30 31 32 33">
    <location>
        <position position="85"/>
    </location>
    <ligand>
        <name>glycerol</name>
        <dbReference type="ChEBI" id="CHEBI:17754"/>
    </ligand>
</feature>
<feature type="binding site" evidence="14 27 28 29">
    <location>
        <position position="85"/>
    </location>
    <ligand>
        <name>sn-glycerol 3-phosphate</name>
        <dbReference type="ChEBI" id="CHEBI:57597"/>
    </ligand>
</feature>
<feature type="binding site" evidence="2 3 15 18 19 21 22 23 24 25 26 30 31 32 33">
    <location>
        <position position="136"/>
    </location>
    <ligand>
        <name>glycerol</name>
        <dbReference type="ChEBI" id="CHEBI:17754"/>
    </ligand>
</feature>
<feature type="binding site" evidence="14 27 28 29">
    <location>
        <position position="136"/>
    </location>
    <ligand>
        <name>sn-glycerol 3-phosphate</name>
        <dbReference type="ChEBI" id="CHEBI:57597"/>
    </ligand>
</feature>
<feature type="binding site" evidence="19 21">
    <location>
        <position position="235"/>
    </location>
    <ligand>
        <name>beta-D-fructose 1,6-bisphosphate</name>
        <dbReference type="ChEBI" id="CHEBI:32966"/>
        <note>allosteric inhibitor</note>
    </ligand>
</feature>
<feature type="binding site" evidence="19 21">
    <location>
        <position position="237"/>
    </location>
    <ligand>
        <name>beta-D-fructose 1,6-bisphosphate</name>
        <dbReference type="ChEBI" id="CHEBI:32966"/>
        <note>allosteric inhibitor</note>
    </ligand>
</feature>
<feature type="binding site" evidence="2 3 15 18 19 21 22 23 24 25 26 30 31 32 33">
    <location>
        <position position="246"/>
    </location>
    <ligand>
        <name>glycerol</name>
        <dbReference type="ChEBI" id="CHEBI:17754"/>
    </ligand>
</feature>
<feature type="binding site" evidence="14 27 28 29">
    <location>
        <position position="246"/>
    </location>
    <ligand>
        <name>sn-glycerol 3-phosphate</name>
        <dbReference type="ChEBI" id="CHEBI:57597"/>
    </ligand>
</feature>
<feature type="binding site" evidence="15 19 21 22">
    <location>
        <position position="247"/>
    </location>
    <ligand>
        <name>glycerol</name>
        <dbReference type="ChEBI" id="CHEBI:17754"/>
    </ligand>
</feature>
<feature type="binding site" evidence="14 15 18 26 27 28 29 30">
    <location>
        <position position="268"/>
    </location>
    <ligand>
        <name>ADP</name>
        <dbReference type="ChEBI" id="CHEBI:456216"/>
    </ligand>
</feature>
<feature type="binding site" evidence="20 24 32">
    <location>
        <position position="268"/>
    </location>
    <ligand>
        <name>ATP</name>
        <dbReference type="ChEBI" id="CHEBI:30616"/>
    </ligand>
</feature>
<feature type="binding site" evidence="14 15 18 26 28 29 30">
    <location>
        <position position="311"/>
    </location>
    <ligand>
        <name>ADP</name>
        <dbReference type="ChEBI" id="CHEBI:456216"/>
    </ligand>
</feature>
<feature type="binding site" evidence="20 24 32">
    <location>
        <position position="311"/>
    </location>
    <ligand>
        <name>ATP</name>
        <dbReference type="ChEBI" id="CHEBI:30616"/>
    </ligand>
</feature>
<feature type="binding site" evidence="20 24 32">
    <location>
        <position position="315"/>
    </location>
    <ligand>
        <name>ATP</name>
        <dbReference type="ChEBI" id="CHEBI:30616"/>
    </ligand>
</feature>
<feature type="binding site" evidence="14 15 18 26 27 28 29 30">
    <location>
        <position position="412"/>
    </location>
    <ligand>
        <name>ADP</name>
        <dbReference type="ChEBI" id="CHEBI:456216"/>
    </ligand>
</feature>
<feature type="binding site" evidence="20 24 31 32">
    <location>
        <position position="412"/>
    </location>
    <ligand>
        <name>ATP</name>
        <dbReference type="ChEBI" id="CHEBI:30616"/>
    </ligand>
</feature>
<feature type="binding site" evidence="14 15 26 27 28 29">
    <location>
        <position position="416"/>
    </location>
    <ligand>
        <name>ADP</name>
        <dbReference type="ChEBI" id="CHEBI:456216"/>
    </ligand>
</feature>
<feature type="binding site" evidence="14 27 28 29">
    <location>
        <position position="479"/>
    </location>
    <ligand>
        <name>Zn(2+)</name>
        <dbReference type="ChEBI" id="CHEBI:29105"/>
        <note>ligand shared with EIIA-Glc</note>
    </ligand>
</feature>
<feature type="modified residue" description="N6-malonyllysine" evidence="6">
    <location>
        <position position="233"/>
    </location>
</feature>
<feature type="mutagenesis site" description="Abolishes inhibition of GK by FBP via disruption of the dimer-tetramer assembly reaction. Inhibition by EIIA-Glc is unchanged compared to wild type. The activity of this mutant is significantly higher than wild-type, and the Michaelis constants are increased slightly compared to wild-type." evidence="2">
    <original>S</original>
    <variation>W</variation>
    <location>
        <position position="59"/>
    </location>
</feature>
<feature type="mutagenesis site" description="Although it completely abolishes FBP regulation and disrupts dimer-tetramer equilibrium, the crystal structure is essentially identical to the symmetric tetramer found in the FBP-bound form of the enzyme." evidence="18">
    <original>A</original>
    <variation>T</variation>
    <location>
        <position position="66"/>
    </location>
</feature>
<feature type="mutagenesis site" description="Displays an increased enzymatic activity and a decreased allosteric regulation by FBP compared to wild-type. It displays a dimer form and is resistant to tetramer formation in the presence of FBP, whereas wild-type dimers are converted into inactive tetramers in the presence of FBP." evidence="3">
    <original>G</original>
    <variation>D</variation>
    <location>
        <position position="231"/>
    </location>
</feature>
<feature type="mutagenesis site" description="Drastically reduces inhibition of GK by FBP and lowers, but did not eliminate, the ability of FBP to promote tetramer association." evidence="19">
    <original>R</original>
    <variation>A</variation>
    <location>
        <position position="237"/>
    </location>
</feature>
<feature type="mutagenesis site" description="In glpK22; abolishes glucose control of glycerol utilization." evidence="16">
    <original>G</original>
    <variation>S</variation>
    <location>
        <position position="305"/>
    </location>
</feature>
<feature type="mutagenesis site" description="It decreases Vmax to about 10% of the wild-type value and the affinity for substrate is increased about two- to fourfold. This mutation decreases the catalytic activity in a manner that is analogous to that obtained upon EIIA-Glc binding. It increases the affinity for FBP about fivefold." evidence="18">
    <original>I</original>
    <variation>D</variation>
    <location>
        <position position="475"/>
    </location>
</feature>
<feature type="mutagenesis site" description="It decreases Vmax to about 10% of the wild-type value and the affinity for substrate is increased about two- to fourfold. This mutation decreases the catalytic activity in a manner that is analogous to that obtained upon EIIA-Glc binding. Regulation by FBP is not affected by this substitution. No inhibition by EIIA-Glc is observed, which is consistent with a decrease in affinity for EIIA-Glc of about 250-fold." evidence="18">
    <original>R</original>
    <variation>D</variation>
    <location>
        <position position="480"/>
    </location>
</feature>
<feature type="strand" evidence="39">
    <location>
        <begin position="6"/>
        <end position="12"/>
    </location>
</feature>
<feature type="strand" evidence="39">
    <location>
        <begin position="14"/>
        <end position="22"/>
    </location>
</feature>
<feature type="strand" evidence="35">
    <location>
        <begin position="24"/>
        <end position="26"/>
    </location>
</feature>
<feature type="strand" evidence="39">
    <location>
        <begin position="28"/>
        <end position="35"/>
    </location>
</feature>
<feature type="strand" evidence="35">
    <location>
        <begin position="41"/>
        <end position="44"/>
    </location>
</feature>
<feature type="helix" evidence="39">
    <location>
        <begin position="50"/>
        <end position="68"/>
    </location>
</feature>
<feature type="helix" evidence="39">
    <location>
        <begin position="72"/>
        <end position="74"/>
    </location>
</feature>
<feature type="strand" evidence="39">
    <location>
        <begin position="75"/>
        <end position="82"/>
    </location>
</feature>
<feature type="strand" evidence="39">
    <location>
        <begin position="87"/>
        <end position="91"/>
    </location>
</feature>
<feature type="turn" evidence="39">
    <location>
        <begin position="92"/>
        <end position="94"/>
    </location>
</feature>
<feature type="strand" evidence="39">
    <location>
        <begin position="97"/>
        <end position="99"/>
    </location>
</feature>
<feature type="helix" evidence="39">
    <location>
        <begin position="110"/>
        <end position="118"/>
    </location>
</feature>
<feature type="turn" evidence="34">
    <location>
        <begin position="119"/>
        <end position="121"/>
    </location>
</feature>
<feature type="helix" evidence="39">
    <location>
        <begin position="122"/>
        <end position="129"/>
    </location>
</feature>
<feature type="helix" evidence="39">
    <location>
        <begin position="138"/>
        <end position="148"/>
    </location>
</feature>
<feature type="strand" evidence="35">
    <location>
        <begin position="149"/>
        <end position="151"/>
    </location>
</feature>
<feature type="helix" evidence="39">
    <location>
        <begin position="152"/>
        <end position="157"/>
    </location>
</feature>
<feature type="turn" evidence="38">
    <location>
        <begin position="158"/>
        <end position="160"/>
    </location>
</feature>
<feature type="strand" evidence="39">
    <location>
        <begin position="161"/>
        <end position="164"/>
    </location>
</feature>
<feature type="helix" evidence="39">
    <location>
        <begin position="166"/>
        <end position="174"/>
    </location>
</feature>
<feature type="turn" evidence="39">
    <location>
        <begin position="175"/>
        <end position="177"/>
    </location>
</feature>
<feature type="strand" evidence="39">
    <location>
        <begin position="181"/>
        <end position="183"/>
    </location>
</feature>
<feature type="helix" evidence="39">
    <location>
        <begin position="184"/>
        <end position="187"/>
    </location>
</feature>
<feature type="strand" evidence="39">
    <location>
        <begin position="190"/>
        <end position="194"/>
    </location>
</feature>
<feature type="turn" evidence="39">
    <location>
        <begin position="195"/>
        <end position="198"/>
    </location>
</feature>
<feature type="helix" evidence="39">
    <location>
        <begin position="202"/>
        <end position="208"/>
    </location>
</feature>
<feature type="helix" evidence="39">
    <location>
        <begin position="212"/>
        <end position="214"/>
    </location>
</feature>
<feature type="strand" evidence="39">
    <location>
        <begin position="217"/>
        <end position="219"/>
    </location>
</feature>
<feature type="strand" evidence="39">
    <location>
        <begin position="221"/>
        <end position="228"/>
    </location>
</feature>
<feature type="strand" evidence="34">
    <location>
        <begin position="231"/>
        <end position="235"/>
    </location>
</feature>
<feature type="strand" evidence="39">
    <location>
        <begin position="238"/>
        <end position="245"/>
    </location>
</feature>
<feature type="helix" evidence="39">
    <location>
        <begin position="246"/>
        <end position="253"/>
    </location>
</feature>
<feature type="strand" evidence="39">
    <location>
        <begin position="262"/>
        <end position="275"/>
    </location>
</feature>
<feature type="strand" evidence="39">
    <location>
        <begin position="284"/>
        <end position="286"/>
    </location>
</feature>
<feature type="strand" evidence="39">
    <location>
        <begin position="288"/>
        <end position="293"/>
    </location>
</feature>
<feature type="turn" evidence="36">
    <location>
        <begin position="295"/>
        <end position="297"/>
    </location>
</feature>
<feature type="strand" evidence="39">
    <location>
        <begin position="299"/>
        <end position="308"/>
    </location>
</feature>
<feature type="helix" evidence="39">
    <location>
        <begin position="311"/>
        <end position="319"/>
    </location>
</feature>
<feature type="strand" evidence="39">
    <location>
        <begin position="326"/>
        <end position="328"/>
    </location>
</feature>
<feature type="helix" evidence="39">
    <location>
        <begin position="330"/>
        <end position="334"/>
    </location>
</feature>
<feature type="strand" evidence="39">
    <location>
        <begin position="337"/>
        <end position="339"/>
    </location>
</feature>
<feature type="strand" evidence="39">
    <location>
        <begin position="344"/>
        <end position="346"/>
    </location>
</feature>
<feature type="helix" evidence="38">
    <location>
        <begin position="348"/>
        <end position="350"/>
    </location>
</feature>
<feature type="turn" evidence="39">
    <location>
        <begin position="354"/>
        <end position="356"/>
    </location>
</feature>
<feature type="strand" evidence="39">
    <location>
        <begin position="363"/>
        <end position="368"/>
    </location>
</feature>
<feature type="helix" evidence="39">
    <location>
        <begin position="374"/>
        <end position="400"/>
    </location>
</feature>
<feature type="strand" evidence="39">
    <location>
        <begin position="405"/>
        <end position="411"/>
    </location>
</feature>
<feature type="helix" evidence="39">
    <location>
        <begin position="412"/>
        <end position="415"/>
    </location>
</feature>
<feature type="helix" evidence="39">
    <location>
        <begin position="417"/>
        <end position="427"/>
    </location>
</feature>
<feature type="strand" evidence="39">
    <location>
        <begin position="429"/>
        <end position="435"/>
    </location>
</feature>
<feature type="helix" evidence="39">
    <location>
        <begin position="439"/>
        <end position="451"/>
    </location>
</feature>
<feature type="strand" evidence="39">
    <location>
        <begin position="454"/>
        <end position="456"/>
    </location>
</feature>
<feature type="helix" evidence="39">
    <location>
        <begin position="458"/>
        <end position="460"/>
    </location>
</feature>
<feature type="turn" evidence="37">
    <location>
        <begin position="461"/>
        <end position="463"/>
    </location>
</feature>
<feature type="strand" evidence="39">
    <location>
        <begin position="467"/>
        <end position="471"/>
    </location>
</feature>
<feature type="helix" evidence="39">
    <location>
        <begin position="477"/>
        <end position="494"/>
    </location>
</feature>
<name>GLPK_ECOLI</name>